<name>NU2C1_LEMMI</name>
<sequence length="510" mass="56821">MIWHVQNEVFILDSTRIFMKAFHLLLFNGSFILPECILIFGLILLLMIDSTSDQKDRPWFYFISSTSLVMSITALLFRWREEPMISFSGNFQTNNFNEIFQFLILLCSTLCIPLSVEYIECTEMAITEFLLFILTATLGGMFLCGANDLITIFVALECFSLCSYLLSGYTKRDVRSNEATTKYLLMGGASSSILVHGFSWLYGLSGGEIELQEIVNGLINTQMYNSPGISIALIFITVGIGFKLSLAPFHQWTPDVYEGSPTPVVAFLSVTSKVAASALATRIFDIPFYFSSNEWHLLLEILAILSMILGNLIAITQTSMKRMLAYSSIGQIGYVIIGIIVGDSNDGYASMITYMLFYIAMNLGTFARIVLFGLRTGTDNIRDYAGLYTKDPFLALSLALCLLSLGGLPPLAGFFGKLHLFWCGWQAGLYFLVSIGLLTSVVSIYYYLKIIKLLMTGRNQEITPHVRNYRKSPLRSNNSIELSMTVCVIASTIPGISMNPILAIAQDTLF</sequence>
<accession>P0CC82</accession>
<accession>A9L9E0</accession>
<protein>
    <recommendedName>
        <fullName evidence="1">NAD(P)H-quinone oxidoreductase subunit 2 A, chloroplastic</fullName>
        <ecNumber evidence="1">7.1.1.-</ecNumber>
    </recommendedName>
    <alternativeName>
        <fullName evidence="1">NAD(P)H dehydrogenase, subunit 2 A</fullName>
    </alternativeName>
    <alternativeName>
        <fullName evidence="1">NADH-plastoquinone oxidoreductase subunit 2 A</fullName>
    </alternativeName>
</protein>
<gene>
    <name evidence="1" type="primary">ndhB1</name>
</gene>
<evidence type="ECO:0000255" key="1">
    <source>
        <dbReference type="HAMAP-Rule" id="MF_00445"/>
    </source>
</evidence>
<reference key="1">
    <citation type="journal article" date="2008" name="J. Mol. Evol.">
        <title>Complete sequence of the Duckweed (Lemna minor) chloroplast genome: structural organization and phylogenetic relationships to other angiosperms.</title>
        <authorList>
            <person name="Mardanov A.V."/>
            <person name="Ravin N.V."/>
            <person name="Kuznetsov B.B."/>
            <person name="Samigullin T.H."/>
            <person name="Antonov A.S."/>
            <person name="Kolganova T.V."/>
            <person name="Skyabin K.G."/>
        </authorList>
    </citation>
    <scope>NUCLEOTIDE SEQUENCE [LARGE SCALE GENOMIC DNA]</scope>
</reference>
<comment type="function">
    <text evidence="1">NDH shuttles electrons from NAD(P)H:plastoquinone, via FMN and iron-sulfur (Fe-S) centers, to quinones in the photosynthetic chain and possibly in a chloroplast respiratory chain. The immediate electron acceptor for the enzyme in this species is believed to be plastoquinone. Couples the redox reaction to proton translocation, and thus conserves the redox energy in a proton gradient.</text>
</comment>
<comment type="catalytic activity">
    <reaction evidence="1">
        <text>a plastoquinone + NADH + (n+1) H(+)(in) = a plastoquinol + NAD(+) + n H(+)(out)</text>
        <dbReference type="Rhea" id="RHEA:42608"/>
        <dbReference type="Rhea" id="RHEA-COMP:9561"/>
        <dbReference type="Rhea" id="RHEA-COMP:9562"/>
        <dbReference type="ChEBI" id="CHEBI:15378"/>
        <dbReference type="ChEBI" id="CHEBI:17757"/>
        <dbReference type="ChEBI" id="CHEBI:57540"/>
        <dbReference type="ChEBI" id="CHEBI:57945"/>
        <dbReference type="ChEBI" id="CHEBI:62192"/>
    </reaction>
</comment>
<comment type="catalytic activity">
    <reaction evidence="1">
        <text>a plastoquinone + NADPH + (n+1) H(+)(in) = a plastoquinol + NADP(+) + n H(+)(out)</text>
        <dbReference type="Rhea" id="RHEA:42612"/>
        <dbReference type="Rhea" id="RHEA-COMP:9561"/>
        <dbReference type="Rhea" id="RHEA-COMP:9562"/>
        <dbReference type="ChEBI" id="CHEBI:15378"/>
        <dbReference type="ChEBI" id="CHEBI:17757"/>
        <dbReference type="ChEBI" id="CHEBI:57783"/>
        <dbReference type="ChEBI" id="CHEBI:58349"/>
        <dbReference type="ChEBI" id="CHEBI:62192"/>
    </reaction>
</comment>
<comment type="subunit">
    <text evidence="1">NDH is composed of at least 16 different subunits, 5 of which are encoded in the nucleus.</text>
</comment>
<comment type="subcellular location">
    <subcellularLocation>
        <location evidence="1">Plastid</location>
        <location evidence="1">Chloroplast thylakoid membrane</location>
        <topology evidence="1">Multi-pass membrane protein</topology>
    </subcellularLocation>
</comment>
<comment type="similarity">
    <text evidence="1">Belongs to the complex I subunit 2 family.</text>
</comment>
<organism>
    <name type="scientific">Lemna minor</name>
    <name type="common">Common duckweed</name>
    <dbReference type="NCBI Taxonomy" id="4472"/>
    <lineage>
        <taxon>Eukaryota</taxon>
        <taxon>Viridiplantae</taxon>
        <taxon>Streptophyta</taxon>
        <taxon>Embryophyta</taxon>
        <taxon>Tracheophyta</taxon>
        <taxon>Spermatophyta</taxon>
        <taxon>Magnoliopsida</taxon>
        <taxon>Liliopsida</taxon>
        <taxon>Araceae</taxon>
        <taxon>Lemnoideae</taxon>
        <taxon>Lemna</taxon>
    </lineage>
</organism>
<proteinExistence type="inferred from homology"/>
<feature type="chain" id="PRO_0000344270" description="NAD(P)H-quinone oxidoreductase subunit 2 A, chloroplastic">
    <location>
        <begin position="1"/>
        <end position="510"/>
    </location>
</feature>
<feature type="transmembrane region" description="Helical" evidence="1">
    <location>
        <begin position="24"/>
        <end position="44"/>
    </location>
</feature>
<feature type="transmembrane region" description="Helical" evidence="1">
    <location>
        <begin position="59"/>
        <end position="79"/>
    </location>
</feature>
<feature type="transmembrane region" description="Helical" evidence="1">
    <location>
        <begin position="99"/>
        <end position="119"/>
    </location>
</feature>
<feature type="transmembrane region" description="Helical" evidence="1">
    <location>
        <begin position="124"/>
        <end position="144"/>
    </location>
</feature>
<feature type="transmembrane region" description="Helical" evidence="1">
    <location>
        <begin position="149"/>
        <end position="169"/>
    </location>
</feature>
<feature type="transmembrane region" description="Helical" evidence="1">
    <location>
        <begin position="184"/>
        <end position="204"/>
    </location>
</feature>
<feature type="transmembrane region" description="Helical" evidence="1">
    <location>
        <begin position="229"/>
        <end position="249"/>
    </location>
</feature>
<feature type="transmembrane region" description="Helical" evidence="1">
    <location>
        <begin position="262"/>
        <end position="284"/>
    </location>
</feature>
<feature type="transmembrane region" description="Helical" evidence="1">
    <location>
        <begin position="295"/>
        <end position="315"/>
    </location>
</feature>
<feature type="transmembrane region" description="Helical" evidence="1">
    <location>
        <begin position="323"/>
        <end position="343"/>
    </location>
</feature>
<feature type="transmembrane region" description="Helical" evidence="1">
    <location>
        <begin position="354"/>
        <end position="374"/>
    </location>
</feature>
<feature type="transmembrane region" description="Helical" evidence="1">
    <location>
        <begin position="395"/>
        <end position="415"/>
    </location>
</feature>
<feature type="transmembrane region" description="Helical" evidence="1">
    <location>
        <begin position="418"/>
        <end position="438"/>
    </location>
</feature>
<keyword id="KW-0150">Chloroplast</keyword>
<keyword id="KW-0472">Membrane</keyword>
<keyword id="KW-0520">NAD</keyword>
<keyword id="KW-0521">NADP</keyword>
<keyword id="KW-0934">Plastid</keyword>
<keyword id="KW-0618">Plastoquinone</keyword>
<keyword id="KW-0874">Quinone</keyword>
<keyword id="KW-0793">Thylakoid</keyword>
<keyword id="KW-1278">Translocase</keyword>
<keyword id="KW-0812">Transmembrane</keyword>
<keyword id="KW-1133">Transmembrane helix</keyword>
<keyword id="KW-0813">Transport</keyword>
<geneLocation type="chloroplast"/>
<dbReference type="EC" id="7.1.1.-" evidence="1"/>
<dbReference type="EMBL" id="DQ400350">
    <property type="protein sequence ID" value="ABD48539.1"/>
    <property type="molecule type" value="Genomic_DNA"/>
</dbReference>
<dbReference type="SMR" id="P0CC82"/>
<dbReference type="GO" id="GO:0009535">
    <property type="term" value="C:chloroplast thylakoid membrane"/>
    <property type="evidence" value="ECO:0007669"/>
    <property type="project" value="UniProtKB-SubCell"/>
</dbReference>
<dbReference type="GO" id="GO:0008137">
    <property type="term" value="F:NADH dehydrogenase (ubiquinone) activity"/>
    <property type="evidence" value="ECO:0007669"/>
    <property type="project" value="InterPro"/>
</dbReference>
<dbReference type="GO" id="GO:0048038">
    <property type="term" value="F:quinone binding"/>
    <property type="evidence" value="ECO:0007669"/>
    <property type="project" value="UniProtKB-KW"/>
</dbReference>
<dbReference type="GO" id="GO:0042773">
    <property type="term" value="P:ATP synthesis coupled electron transport"/>
    <property type="evidence" value="ECO:0007669"/>
    <property type="project" value="InterPro"/>
</dbReference>
<dbReference type="GO" id="GO:0019684">
    <property type="term" value="P:photosynthesis, light reaction"/>
    <property type="evidence" value="ECO:0007669"/>
    <property type="project" value="UniProtKB-UniRule"/>
</dbReference>
<dbReference type="HAMAP" id="MF_00445">
    <property type="entry name" value="NDH1_NuoN_1"/>
    <property type="match status" value="1"/>
</dbReference>
<dbReference type="InterPro" id="IPR010096">
    <property type="entry name" value="NADH-Q_OxRdtase_suN/2"/>
</dbReference>
<dbReference type="InterPro" id="IPR001750">
    <property type="entry name" value="ND/Mrp_TM"/>
</dbReference>
<dbReference type="InterPro" id="IPR045693">
    <property type="entry name" value="Ndh2_N"/>
</dbReference>
<dbReference type="NCBIfam" id="TIGR01770">
    <property type="entry name" value="NDH_I_N"/>
    <property type="match status" value="1"/>
</dbReference>
<dbReference type="NCBIfam" id="NF002701">
    <property type="entry name" value="PRK02504.1"/>
    <property type="match status" value="1"/>
</dbReference>
<dbReference type="PANTHER" id="PTHR22773">
    <property type="entry name" value="NADH DEHYDROGENASE"/>
    <property type="match status" value="1"/>
</dbReference>
<dbReference type="Pfam" id="PF19530">
    <property type="entry name" value="Ndh2_N"/>
    <property type="match status" value="1"/>
</dbReference>
<dbReference type="Pfam" id="PF00361">
    <property type="entry name" value="Proton_antipo_M"/>
    <property type="match status" value="1"/>
</dbReference>
<dbReference type="PRINTS" id="PR01434">
    <property type="entry name" value="NADHDHGNASE5"/>
</dbReference>